<proteinExistence type="inferred from homology"/>
<evidence type="ECO:0000255" key="1">
    <source>
        <dbReference type="HAMAP-Rule" id="MF_01390"/>
    </source>
</evidence>
<accession>Q8MD32</accession>
<keyword id="KW-0150">Chloroplast</keyword>
<keyword id="KW-0507">mRNA processing</keyword>
<keyword id="KW-0934">Plastid</keyword>
<keyword id="KW-0694">RNA-binding</keyword>
<keyword id="KW-0819">tRNA processing</keyword>
<name>MATK_MENLA</name>
<sequence length="504" mass="59768">MEEFQRYFELDRYQQHDFLYPLIFQEYIYALAHDHGLNRSIVLENPGYDNKSSLLIVKRLITRMYQQNHYIISSNDSNQNPFFGHNKNLYSQMISEGFVVIVEIPFSLRLRSSLEGKEIVKSQNLQSIHSIFPFLEDKFLHLNYVXDILIPYPIHLEILVQPLRHWVKDASSLHLLRFFLHEYRNWNSLITPKRPSAYFSKRNQRLFLFLYNSHVCEYESIFLLTQSSHLRSTSSGALLERIYFYGKLEHSVEVFAKDFQAILWLFKDPFIHYLRYQGKSILASKGTSLLMNKWKYYLLNCWQCHFYVWSQPRRIYINQLSNHSLDFLGYLSSVRLNPSMVRSQMIENSFLIDNAIKKFDTIVPIIPMIQSLAKAKFCNVLGHPISKPVWADLSDSDIIDRFGRICRNLSHYHSGSSKKKTLYRIKYILRLSCARTLARKHKSTVRAFLKRVGSELLEEFFTEEEQVLSLTFPRAFSTSTSRGLYRRRIWYLDIICINDLANHE</sequence>
<reference key="1">
    <citation type="journal article" date="2001" name="Am. J. Bot.">
        <title>Phylogenetic relationships of Loasaceae subfamily Gronovioideae inferred from matK and ITS sequence data.</title>
        <authorList>
            <person name="Moody M.L."/>
            <person name="Hufford L."/>
            <person name="Soltis D.E."/>
            <person name="Soltis P.S."/>
        </authorList>
    </citation>
    <scope>NUCLEOTIDE SEQUENCE [GENOMIC DNA]</scope>
</reference>
<gene>
    <name evidence="1" type="primary">matK</name>
</gene>
<dbReference type="EMBL" id="AF503306">
    <property type="protein sequence ID" value="AAM54513.1"/>
    <property type="molecule type" value="Genomic_DNA"/>
</dbReference>
<dbReference type="GO" id="GO:0009507">
    <property type="term" value="C:chloroplast"/>
    <property type="evidence" value="ECO:0007669"/>
    <property type="project" value="UniProtKB-SubCell"/>
</dbReference>
<dbReference type="GO" id="GO:0003723">
    <property type="term" value="F:RNA binding"/>
    <property type="evidence" value="ECO:0007669"/>
    <property type="project" value="UniProtKB-KW"/>
</dbReference>
<dbReference type="GO" id="GO:0006397">
    <property type="term" value="P:mRNA processing"/>
    <property type="evidence" value="ECO:0007669"/>
    <property type="project" value="UniProtKB-KW"/>
</dbReference>
<dbReference type="GO" id="GO:0008380">
    <property type="term" value="P:RNA splicing"/>
    <property type="evidence" value="ECO:0007669"/>
    <property type="project" value="UniProtKB-UniRule"/>
</dbReference>
<dbReference type="GO" id="GO:0008033">
    <property type="term" value="P:tRNA processing"/>
    <property type="evidence" value="ECO:0007669"/>
    <property type="project" value="UniProtKB-KW"/>
</dbReference>
<dbReference type="HAMAP" id="MF_01390">
    <property type="entry name" value="MatK"/>
    <property type="match status" value="1"/>
</dbReference>
<dbReference type="InterPro" id="IPR024937">
    <property type="entry name" value="Domain_X"/>
</dbReference>
<dbReference type="InterPro" id="IPR002866">
    <property type="entry name" value="Maturase_MatK"/>
</dbReference>
<dbReference type="InterPro" id="IPR024942">
    <property type="entry name" value="Maturase_MatK_N"/>
</dbReference>
<dbReference type="PANTHER" id="PTHR34811">
    <property type="entry name" value="MATURASE K"/>
    <property type="match status" value="1"/>
</dbReference>
<dbReference type="PANTHER" id="PTHR34811:SF1">
    <property type="entry name" value="MATURASE K"/>
    <property type="match status" value="1"/>
</dbReference>
<dbReference type="Pfam" id="PF01348">
    <property type="entry name" value="Intron_maturas2"/>
    <property type="match status" value="1"/>
</dbReference>
<dbReference type="Pfam" id="PF01824">
    <property type="entry name" value="MatK_N"/>
    <property type="match status" value="1"/>
</dbReference>
<feature type="chain" id="PRO_0000143517" description="Maturase K">
    <location>
        <begin position="1"/>
        <end position="504"/>
    </location>
</feature>
<comment type="function">
    <text evidence="1">Usually encoded in the trnK tRNA gene intron. Probably assists in splicing its own and other chloroplast group II introns.</text>
</comment>
<comment type="subcellular location">
    <subcellularLocation>
        <location>Plastid</location>
        <location>Chloroplast</location>
    </subcellularLocation>
</comment>
<comment type="similarity">
    <text evidence="1">Belongs to the intron maturase 2 family. MatK subfamily.</text>
</comment>
<protein>
    <recommendedName>
        <fullName evidence="1">Maturase K</fullName>
    </recommendedName>
    <alternativeName>
        <fullName evidence="1">Intron maturase</fullName>
    </alternativeName>
</protein>
<organism>
    <name type="scientific">Mentzelia laevicaulis</name>
    <name type="common">Blazing star</name>
    <name type="synonym">Bartonia laevicaulis</name>
    <dbReference type="NCBI Taxonomy" id="193489"/>
    <lineage>
        <taxon>Eukaryota</taxon>
        <taxon>Viridiplantae</taxon>
        <taxon>Streptophyta</taxon>
        <taxon>Embryophyta</taxon>
        <taxon>Tracheophyta</taxon>
        <taxon>Spermatophyta</taxon>
        <taxon>Magnoliopsida</taxon>
        <taxon>eudicotyledons</taxon>
        <taxon>Gunneridae</taxon>
        <taxon>Pentapetalae</taxon>
        <taxon>asterids</taxon>
        <taxon>Cornales</taxon>
        <taxon>Loasaceae</taxon>
        <taxon>Mentzelia</taxon>
    </lineage>
</organism>
<geneLocation type="chloroplast"/>